<evidence type="ECO:0000255" key="1">
    <source>
        <dbReference type="HAMAP-Rule" id="MF_00533"/>
    </source>
</evidence>
<protein>
    <recommendedName>
        <fullName evidence="1">Nitrogenase iron protein</fullName>
        <ecNumber evidence="1">1.18.6.1</ecNumber>
    </recommendedName>
    <alternativeName>
        <fullName evidence="1">Nitrogenase Fe protein</fullName>
    </alternativeName>
    <alternativeName>
        <fullName evidence="1">Nitrogenase component II</fullName>
    </alternativeName>
    <alternativeName>
        <fullName evidence="1">Nitrogenase reductase</fullName>
    </alternativeName>
</protein>
<proteinExistence type="inferred from homology"/>
<dbReference type="EC" id="1.18.6.1" evidence="1"/>
<dbReference type="EMBL" id="CP000240">
    <property type="protein sequence ID" value="ABD01417.1"/>
    <property type="molecule type" value="Genomic_DNA"/>
</dbReference>
<dbReference type="RefSeq" id="WP_011430651.1">
    <property type="nucleotide sequence ID" value="NC_007776.1"/>
</dbReference>
<dbReference type="SMR" id="Q2JP78"/>
<dbReference type="STRING" id="321332.CYB_0421"/>
<dbReference type="KEGG" id="cyb:CYB_0421"/>
<dbReference type="eggNOG" id="COG1348">
    <property type="taxonomic scope" value="Bacteria"/>
</dbReference>
<dbReference type="HOGENOM" id="CLU_059373_0_0_3"/>
<dbReference type="OrthoDB" id="9778641at2"/>
<dbReference type="Proteomes" id="UP000001938">
    <property type="component" value="Chromosome"/>
</dbReference>
<dbReference type="GO" id="GO:0051539">
    <property type="term" value="F:4 iron, 4 sulfur cluster binding"/>
    <property type="evidence" value="ECO:0007669"/>
    <property type="project" value="UniProtKB-KW"/>
</dbReference>
<dbReference type="GO" id="GO:0005524">
    <property type="term" value="F:ATP binding"/>
    <property type="evidence" value="ECO:0007669"/>
    <property type="project" value="UniProtKB-UniRule"/>
</dbReference>
<dbReference type="GO" id="GO:0046872">
    <property type="term" value="F:metal ion binding"/>
    <property type="evidence" value="ECO:0007669"/>
    <property type="project" value="UniProtKB-KW"/>
</dbReference>
<dbReference type="GO" id="GO:0016163">
    <property type="term" value="F:nitrogenase activity"/>
    <property type="evidence" value="ECO:0007669"/>
    <property type="project" value="UniProtKB-UniRule"/>
</dbReference>
<dbReference type="GO" id="GO:0009399">
    <property type="term" value="P:nitrogen fixation"/>
    <property type="evidence" value="ECO:0007669"/>
    <property type="project" value="UniProtKB-UniRule"/>
</dbReference>
<dbReference type="CDD" id="cd02040">
    <property type="entry name" value="NifH"/>
    <property type="match status" value="1"/>
</dbReference>
<dbReference type="FunFam" id="3.40.50.300:FF:001379">
    <property type="entry name" value="Nitrogenase iron protein 1"/>
    <property type="match status" value="1"/>
</dbReference>
<dbReference type="Gene3D" id="3.40.50.300">
    <property type="entry name" value="P-loop containing nucleotide triphosphate hydrolases"/>
    <property type="match status" value="1"/>
</dbReference>
<dbReference type="HAMAP" id="MF_00533">
    <property type="entry name" value="NifH"/>
    <property type="match status" value="1"/>
</dbReference>
<dbReference type="InterPro" id="IPR030655">
    <property type="entry name" value="NifH/chlL_CS"/>
</dbReference>
<dbReference type="InterPro" id="IPR000392">
    <property type="entry name" value="NifH/frxC"/>
</dbReference>
<dbReference type="InterPro" id="IPR005977">
    <property type="entry name" value="Nitrogenase_Fe_NifH"/>
</dbReference>
<dbReference type="InterPro" id="IPR027417">
    <property type="entry name" value="P-loop_NTPase"/>
</dbReference>
<dbReference type="NCBIfam" id="TIGR01287">
    <property type="entry name" value="nifH"/>
    <property type="match status" value="1"/>
</dbReference>
<dbReference type="PANTHER" id="PTHR42864">
    <property type="entry name" value="LIGHT-INDEPENDENT PROTOCHLOROPHYLLIDE REDUCTASE IRON-SULFUR ATP-BINDING PROTEIN"/>
    <property type="match status" value="1"/>
</dbReference>
<dbReference type="PANTHER" id="PTHR42864:SF2">
    <property type="entry name" value="LIGHT-INDEPENDENT PROTOCHLOROPHYLLIDE REDUCTASE IRON-SULFUR ATP-BINDING PROTEIN"/>
    <property type="match status" value="1"/>
</dbReference>
<dbReference type="Pfam" id="PF00142">
    <property type="entry name" value="Fer4_NifH"/>
    <property type="match status" value="1"/>
</dbReference>
<dbReference type="PIRSF" id="PIRSF000363">
    <property type="entry name" value="Nitrogenase_iron"/>
    <property type="match status" value="1"/>
</dbReference>
<dbReference type="PRINTS" id="PR00091">
    <property type="entry name" value="NITROGNASEII"/>
</dbReference>
<dbReference type="SUPFAM" id="SSF52540">
    <property type="entry name" value="P-loop containing nucleoside triphosphate hydrolases"/>
    <property type="match status" value="1"/>
</dbReference>
<dbReference type="PROSITE" id="PS00746">
    <property type="entry name" value="NIFH_FRXC_1"/>
    <property type="match status" value="1"/>
</dbReference>
<dbReference type="PROSITE" id="PS00692">
    <property type="entry name" value="NIFH_FRXC_2"/>
    <property type="match status" value="1"/>
</dbReference>
<dbReference type="PROSITE" id="PS51026">
    <property type="entry name" value="NIFH_FRXC_3"/>
    <property type="match status" value="1"/>
</dbReference>
<gene>
    <name evidence="1" type="primary">nifH</name>
    <name type="ordered locus">CYB_0421</name>
</gene>
<reference key="1">
    <citation type="journal article" date="2007" name="ISME J.">
        <title>Population level functional diversity in a microbial community revealed by comparative genomic and metagenomic analyses.</title>
        <authorList>
            <person name="Bhaya D."/>
            <person name="Grossman A.R."/>
            <person name="Steunou A.-S."/>
            <person name="Khuri N."/>
            <person name="Cohan F.M."/>
            <person name="Hamamura N."/>
            <person name="Melendrez M.C."/>
            <person name="Bateson M.M."/>
            <person name="Ward D.M."/>
            <person name="Heidelberg J.F."/>
        </authorList>
    </citation>
    <scope>NUCLEOTIDE SEQUENCE [LARGE SCALE GENOMIC DNA]</scope>
    <source>
        <strain>JA-2-3B'a(2-13)</strain>
    </source>
</reference>
<keyword id="KW-0004">4Fe-4S</keyword>
<keyword id="KW-0013">ADP-ribosylation</keyword>
<keyword id="KW-0067">ATP-binding</keyword>
<keyword id="KW-0408">Iron</keyword>
<keyword id="KW-0411">Iron-sulfur</keyword>
<keyword id="KW-0479">Metal-binding</keyword>
<keyword id="KW-0535">Nitrogen fixation</keyword>
<keyword id="KW-0547">Nucleotide-binding</keyword>
<keyword id="KW-0560">Oxidoreductase</keyword>
<keyword id="KW-1185">Reference proteome</keyword>
<comment type="function">
    <text evidence="1">The key enzymatic reactions in nitrogen fixation are catalyzed by the nitrogenase complex, which has 2 components: the iron protein and the molybdenum-iron protein.</text>
</comment>
<comment type="catalytic activity">
    <reaction evidence="1">
        <text>N2 + 8 reduced [2Fe-2S]-[ferredoxin] + 16 ATP + 16 H2O = H2 + 8 oxidized [2Fe-2S]-[ferredoxin] + 2 NH4(+) + 16 ADP + 16 phosphate + 6 H(+)</text>
        <dbReference type="Rhea" id="RHEA:21448"/>
        <dbReference type="Rhea" id="RHEA-COMP:10000"/>
        <dbReference type="Rhea" id="RHEA-COMP:10001"/>
        <dbReference type="ChEBI" id="CHEBI:15377"/>
        <dbReference type="ChEBI" id="CHEBI:15378"/>
        <dbReference type="ChEBI" id="CHEBI:17997"/>
        <dbReference type="ChEBI" id="CHEBI:18276"/>
        <dbReference type="ChEBI" id="CHEBI:28938"/>
        <dbReference type="ChEBI" id="CHEBI:30616"/>
        <dbReference type="ChEBI" id="CHEBI:33737"/>
        <dbReference type="ChEBI" id="CHEBI:33738"/>
        <dbReference type="ChEBI" id="CHEBI:43474"/>
        <dbReference type="ChEBI" id="CHEBI:456216"/>
        <dbReference type="EC" id="1.18.6.1"/>
    </reaction>
</comment>
<comment type="cofactor">
    <cofactor evidence="1">
        <name>[4Fe-4S] cluster</name>
        <dbReference type="ChEBI" id="CHEBI:49883"/>
    </cofactor>
    <text evidence="1">Binds 1 [4Fe-4S] cluster per dimer.</text>
</comment>
<comment type="subunit">
    <text evidence="1">Homodimer.</text>
</comment>
<comment type="PTM">
    <text evidence="1">The reversible ADP-ribosylation of Arg-99 inactivates the nitrogenase reductase and regulates nitrogenase activity.</text>
</comment>
<comment type="similarity">
    <text evidence="1">Belongs to the NifH/BchL/ChlL family.</text>
</comment>
<name>NIFH_SYNJB</name>
<organism>
    <name type="scientific">Synechococcus sp. (strain JA-2-3B'a(2-13))</name>
    <name type="common">Cyanobacteria bacterium Yellowstone B-Prime</name>
    <dbReference type="NCBI Taxonomy" id="321332"/>
    <lineage>
        <taxon>Bacteria</taxon>
        <taxon>Bacillati</taxon>
        <taxon>Cyanobacteriota</taxon>
        <taxon>Cyanophyceae</taxon>
        <taxon>Synechococcales</taxon>
        <taxon>Synechococcaceae</taxon>
        <taxon>Synechococcus</taxon>
    </lineage>
</organism>
<accession>Q2JP78</accession>
<sequence>MRQIAFYGKGGIGKSTTCQNTVAGMAELGQRIMIVGCDPKADSTRLMLHCKAQTTVLHLAAERGSVEDVELEEVVLTGYRGVRCVESGGPEPGVGCAGRGIITAINFLEENGAYEDLDFVCYDVLGDVVCGGFAMPIREGKAQEIYIVCSGEMMAMYAANNIARGVLKYAYSGGVRLGGLICNSRKVDREIELIEALAEKLNTKMLHFIPRDNVVQHAELRRMTVIEYSPDCNQADEYRALAKKIINNTDLRIPTPISMDELEQLLIEFGVLDDDQKIAHLIGKTEKELAPV</sequence>
<feature type="chain" id="PRO_1000211891" description="Nitrogenase iron protein">
    <location>
        <begin position="1"/>
        <end position="292"/>
    </location>
</feature>
<feature type="binding site" evidence="1">
    <location>
        <begin position="8"/>
        <end position="15"/>
    </location>
    <ligand>
        <name>ATP</name>
        <dbReference type="ChEBI" id="CHEBI:30616"/>
    </ligand>
</feature>
<feature type="binding site" evidence="1">
    <location>
        <position position="96"/>
    </location>
    <ligand>
        <name>[4Fe-4S] cluster</name>
        <dbReference type="ChEBI" id="CHEBI:49883"/>
        <note>ligand shared between dimeric partners</note>
    </ligand>
</feature>
<feature type="binding site" evidence="1">
    <location>
        <position position="130"/>
    </location>
    <ligand>
        <name>[4Fe-4S] cluster</name>
        <dbReference type="ChEBI" id="CHEBI:49883"/>
        <note>ligand shared between dimeric partners</note>
    </ligand>
</feature>
<feature type="modified residue" description="ADP-ribosylarginine; by dinitrogenase reductase ADP-ribosyltransferase" evidence="1">
    <location>
        <position position="99"/>
    </location>
</feature>